<protein>
    <recommendedName>
        <fullName evidence="1">Glucosamine-6-phosphate deaminase</fullName>
        <ecNumber evidence="1">3.5.99.6</ecNumber>
    </recommendedName>
    <alternativeName>
        <fullName evidence="1">GlcN6P deaminase</fullName>
        <shortName evidence="1">GNPDA</shortName>
    </alternativeName>
    <alternativeName>
        <fullName evidence="1">Glucosamine-6-phosphate isomerase</fullName>
    </alternativeName>
</protein>
<proteinExistence type="inferred from homology"/>
<dbReference type="EC" id="3.5.99.6" evidence="1"/>
<dbReference type="EMBL" id="CP000947">
    <property type="protein sequence ID" value="ACA31258.1"/>
    <property type="molecule type" value="Genomic_DNA"/>
</dbReference>
<dbReference type="RefSeq" id="WP_012340645.1">
    <property type="nucleotide sequence ID" value="NC_010519.1"/>
</dbReference>
<dbReference type="SMR" id="B0UUN2"/>
<dbReference type="STRING" id="228400.HSM_1505"/>
<dbReference type="GeneID" id="31487807"/>
<dbReference type="KEGG" id="hsm:HSM_1505"/>
<dbReference type="HOGENOM" id="CLU_049611_0_1_6"/>
<dbReference type="UniPathway" id="UPA00629">
    <property type="reaction ID" value="UER00684"/>
</dbReference>
<dbReference type="GO" id="GO:0005737">
    <property type="term" value="C:cytoplasm"/>
    <property type="evidence" value="ECO:0007669"/>
    <property type="project" value="TreeGrafter"/>
</dbReference>
<dbReference type="GO" id="GO:0004342">
    <property type="term" value="F:glucosamine-6-phosphate deaminase activity"/>
    <property type="evidence" value="ECO:0007669"/>
    <property type="project" value="UniProtKB-UniRule"/>
</dbReference>
<dbReference type="GO" id="GO:0042802">
    <property type="term" value="F:identical protein binding"/>
    <property type="evidence" value="ECO:0007669"/>
    <property type="project" value="TreeGrafter"/>
</dbReference>
<dbReference type="GO" id="GO:0005975">
    <property type="term" value="P:carbohydrate metabolic process"/>
    <property type="evidence" value="ECO:0007669"/>
    <property type="project" value="InterPro"/>
</dbReference>
<dbReference type="GO" id="GO:0006043">
    <property type="term" value="P:glucosamine catabolic process"/>
    <property type="evidence" value="ECO:0007669"/>
    <property type="project" value="TreeGrafter"/>
</dbReference>
<dbReference type="GO" id="GO:0006046">
    <property type="term" value="P:N-acetylglucosamine catabolic process"/>
    <property type="evidence" value="ECO:0007669"/>
    <property type="project" value="TreeGrafter"/>
</dbReference>
<dbReference type="GO" id="GO:0019262">
    <property type="term" value="P:N-acetylneuraminate catabolic process"/>
    <property type="evidence" value="ECO:0007669"/>
    <property type="project" value="UniProtKB-UniRule"/>
</dbReference>
<dbReference type="CDD" id="cd01399">
    <property type="entry name" value="GlcN6P_deaminase"/>
    <property type="match status" value="1"/>
</dbReference>
<dbReference type="FunFam" id="3.40.50.1360:FF:000002">
    <property type="entry name" value="Glucosamine-6-phosphate deaminase"/>
    <property type="match status" value="1"/>
</dbReference>
<dbReference type="Gene3D" id="3.40.50.1360">
    <property type="match status" value="1"/>
</dbReference>
<dbReference type="HAMAP" id="MF_01241">
    <property type="entry name" value="GlcN6P_deamin"/>
    <property type="match status" value="1"/>
</dbReference>
<dbReference type="InterPro" id="IPR006148">
    <property type="entry name" value="Glc/Gal-6P_isomerase"/>
</dbReference>
<dbReference type="InterPro" id="IPR004547">
    <property type="entry name" value="Glucosamine6P_isomerase"/>
</dbReference>
<dbReference type="InterPro" id="IPR018321">
    <property type="entry name" value="Glucosamine6P_isomerase_CS"/>
</dbReference>
<dbReference type="InterPro" id="IPR037171">
    <property type="entry name" value="NagB/RpiA_transferase-like"/>
</dbReference>
<dbReference type="NCBIfam" id="TIGR00502">
    <property type="entry name" value="nagB"/>
    <property type="match status" value="1"/>
</dbReference>
<dbReference type="PANTHER" id="PTHR11280">
    <property type="entry name" value="GLUCOSAMINE-6-PHOSPHATE ISOMERASE"/>
    <property type="match status" value="1"/>
</dbReference>
<dbReference type="PANTHER" id="PTHR11280:SF5">
    <property type="entry name" value="GLUCOSAMINE-6-PHOSPHATE ISOMERASE"/>
    <property type="match status" value="1"/>
</dbReference>
<dbReference type="Pfam" id="PF01182">
    <property type="entry name" value="Glucosamine_iso"/>
    <property type="match status" value="1"/>
</dbReference>
<dbReference type="SUPFAM" id="SSF100950">
    <property type="entry name" value="NagB/RpiA/CoA transferase-like"/>
    <property type="match status" value="1"/>
</dbReference>
<dbReference type="PROSITE" id="PS01161">
    <property type="entry name" value="GLC_GALNAC_ISOMERASE"/>
    <property type="match status" value="1"/>
</dbReference>
<gene>
    <name evidence="1" type="primary">nagB</name>
    <name type="ordered locus">HSM_1505</name>
</gene>
<feature type="chain" id="PRO_1000085750" description="Glucosamine-6-phosphate deaminase">
    <location>
        <begin position="1"/>
        <end position="268"/>
    </location>
</feature>
<feature type="active site" description="Proton acceptor; for enolization step" evidence="1">
    <location>
        <position position="72"/>
    </location>
</feature>
<feature type="active site" description="For ring-opening step" evidence="1">
    <location>
        <position position="141"/>
    </location>
</feature>
<feature type="active site" description="Proton acceptor; for ring-opening step" evidence="1">
    <location>
        <position position="143"/>
    </location>
</feature>
<feature type="active site" description="For ring-opening step" evidence="1">
    <location>
        <position position="148"/>
    </location>
</feature>
<feature type="site" description="Part of the allosteric site" evidence="1">
    <location>
        <position position="151"/>
    </location>
</feature>
<feature type="site" description="Part of the allosteric site" evidence="1">
    <location>
        <position position="158"/>
    </location>
</feature>
<feature type="site" description="Part of the allosteric site" evidence="1">
    <location>
        <position position="160"/>
    </location>
</feature>
<feature type="site" description="Part of the allosteric site" evidence="1">
    <location>
        <position position="161"/>
    </location>
</feature>
<feature type="site" description="Part of the allosteric site" evidence="1">
    <location>
        <position position="254"/>
    </location>
</feature>
<organism>
    <name type="scientific">Histophilus somni (strain 2336)</name>
    <name type="common">Haemophilus somnus</name>
    <dbReference type="NCBI Taxonomy" id="228400"/>
    <lineage>
        <taxon>Bacteria</taxon>
        <taxon>Pseudomonadati</taxon>
        <taxon>Pseudomonadota</taxon>
        <taxon>Gammaproteobacteria</taxon>
        <taxon>Pasteurellales</taxon>
        <taxon>Pasteurellaceae</taxon>
        <taxon>Histophilus</taxon>
    </lineage>
</organism>
<keyword id="KW-0021">Allosteric enzyme</keyword>
<keyword id="KW-0119">Carbohydrate metabolism</keyword>
<keyword id="KW-0378">Hydrolase</keyword>
<name>NAGB_HISS2</name>
<accession>B0UUN2</accession>
<evidence type="ECO:0000255" key="1">
    <source>
        <dbReference type="HAMAP-Rule" id="MF_01241"/>
    </source>
</evidence>
<comment type="function">
    <text evidence="1">Catalyzes the reversible isomerization-deamination of glucosamine 6-phosphate (GlcN6P) to form fructose 6-phosphate (Fru6P) and ammonium ion.</text>
</comment>
<comment type="catalytic activity">
    <reaction evidence="1">
        <text>alpha-D-glucosamine 6-phosphate + H2O = beta-D-fructose 6-phosphate + NH4(+)</text>
        <dbReference type="Rhea" id="RHEA:12172"/>
        <dbReference type="ChEBI" id="CHEBI:15377"/>
        <dbReference type="ChEBI" id="CHEBI:28938"/>
        <dbReference type="ChEBI" id="CHEBI:57634"/>
        <dbReference type="ChEBI" id="CHEBI:75989"/>
        <dbReference type="EC" id="3.5.99.6"/>
    </reaction>
</comment>
<comment type="activity regulation">
    <text evidence="1">Allosterically activated by N-acetylglucosamine 6-phosphate (GlcNAc6P).</text>
</comment>
<comment type="pathway">
    <text evidence="1">Amino-sugar metabolism; N-acetylneuraminate degradation; D-fructose 6-phosphate from N-acetylneuraminate: step 5/5.</text>
</comment>
<comment type="subunit">
    <text evidence="1">Homohexamer.</text>
</comment>
<comment type="similarity">
    <text evidence="1">Belongs to the glucosamine/galactosamine-6-phosphate isomerase family. NagB subfamily.</text>
</comment>
<sequence length="268" mass="30411">MRLIPLKTAQQVSKWAAKYIVDRINTFAPTAERPFVLGLPTGGTPLQTYKELIKLYQAEEVSFKYVVTFNMDEYVGLPKEHPESYHSFMYNNFFNHIDIQPQNINILDGNTDDHDEECRRYEEKIKSYGKINLFMGGVGVDGHIAFNEPASSLASRTRIKTLTEDTLIANSRFFDNDVTKVPKYALTIGVATLLDAEEVMLLVTGHNKALALQAGVEGNVNHFWTISALQLHRHAIFVCDEPATQELKVKTVKYFTELEQRAIHSVLD</sequence>
<reference key="1">
    <citation type="submission" date="2008-02" db="EMBL/GenBank/DDBJ databases">
        <title>Complete sequence of Haemophilus somnus 2336.</title>
        <authorList>
            <consortium name="US DOE Joint Genome Institute"/>
            <person name="Siddaramappa S."/>
            <person name="Duncan A.J."/>
            <person name="Challacombe J.F."/>
            <person name="Rainey D."/>
            <person name="Gillaspy A.F."/>
            <person name="Carson M."/>
            <person name="Gipson J."/>
            <person name="Gipson M."/>
            <person name="Bruce D."/>
            <person name="Detter J.C."/>
            <person name="Han C.S."/>
            <person name="Land M."/>
            <person name="Tapia R."/>
            <person name="Thompson L.S."/>
            <person name="Orvis J."/>
            <person name="Zaitshik J."/>
            <person name="Barnes G."/>
            <person name="Brettin T.S."/>
            <person name="Dyer D.W."/>
            <person name="Inzana T.J."/>
        </authorList>
    </citation>
    <scope>NUCLEOTIDE SEQUENCE [LARGE SCALE GENOMIC DNA]</scope>
    <source>
        <strain>2336</strain>
    </source>
</reference>